<protein>
    <recommendedName>
        <fullName evidence="1">tRNA (guanine-N(1)-)-methyltransferase</fullName>
        <ecNumber evidence="1">2.1.1.228</ecNumber>
    </recommendedName>
    <alternativeName>
        <fullName evidence="1">M1G-methyltransferase</fullName>
    </alternativeName>
    <alternativeName>
        <fullName evidence="1">tRNA [GM37] methyltransferase</fullName>
    </alternativeName>
</protein>
<comment type="function">
    <text evidence="1">Specifically methylates guanosine-37 in various tRNAs.</text>
</comment>
<comment type="catalytic activity">
    <reaction evidence="1">
        <text>guanosine(37) in tRNA + S-adenosyl-L-methionine = N(1)-methylguanosine(37) in tRNA + S-adenosyl-L-homocysteine + H(+)</text>
        <dbReference type="Rhea" id="RHEA:36899"/>
        <dbReference type="Rhea" id="RHEA-COMP:10145"/>
        <dbReference type="Rhea" id="RHEA-COMP:10147"/>
        <dbReference type="ChEBI" id="CHEBI:15378"/>
        <dbReference type="ChEBI" id="CHEBI:57856"/>
        <dbReference type="ChEBI" id="CHEBI:59789"/>
        <dbReference type="ChEBI" id="CHEBI:73542"/>
        <dbReference type="ChEBI" id="CHEBI:74269"/>
        <dbReference type="EC" id="2.1.1.228"/>
    </reaction>
</comment>
<comment type="subunit">
    <text evidence="1">Homodimer.</text>
</comment>
<comment type="subcellular location">
    <subcellularLocation>
        <location evidence="1">Cytoplasm</location>
    </subcellularLocation>
</comment>
<comment type="similarity">
    <text evidence="1">Belongs to the RNA methyltransferase TrmD family.</text>
</comment>
<accession>Q5LCI1</accession>
<dbReference type="EC" id="2.1.1.228" evidence="1"/>
<dbReference type="EMBL" id="CR626927">
    <property type="protein sequence ID" value="CAH08184.1"/>
    <property type="molecule type" value="Genomic_DNA"/>
</dbReference>
<dbReference type="RefSeq" id="WP_010993029.1">
    <property type="nucleotide sequence ID" value="NZ_UFTH01000001.1"/>
</dbReference>
<dbReference type="SMR" id="Q5LCI1"/>
<dbReference type="PaxDb" id="272559-BF9343_2403"/>
<dbReference type="GeneID" id="60367420"/>
<dbReference type="KEGG" id="bfs:BF9343_2403"/>
<dbReference type="eggNOG" id="COG0336">
    <property type="taxonomic scope" value="Bacteria"/>
</dbReference>
<dbReference type="HOGENOM" id="CLU_047363_0_1_10"/>
<dbReference type="Proteomes" id="UP000006731">
    <property type="component" value="Chromosome"/>
</dbReference>
<dbReference type="GO" id="GO:0005829">
    <property type="term" value="C:cytosol"/>
    <property type="evidence" value="ECO:0007669"/>
    <property type="project" value="TreeGrafter"/>
</dbReference>
<dbReference type="GO" id="GO:0052906">
    <property type="term" value="F:tRNA (guanine(37)-N1)-methyltransferase activity"/>
    <property type="evidence" value="ECO:0007669"/>
    <property type="project" value="UniProtKB-UniRule"/>
</dbReference>
<dbReference type="GO" id="GO:0002939">
    <property type="term" value="P:tRNA N1-guanine methylation"/>
    <property type="evidence" value="ECO:0007669"/>
    <property type="project" value="TreeGrafter"/>
</dbReference>
<dbReference type="CDD" id="cd18080">
    <property type="entry name" value="TrmD-like"/>
    <property type="match status" value="1"/>
</dbReference>
<dbReference type="FunFam" id="3.40.1280.10:FF:000001">
    <property type="entry name" value="tRNA (guanine-N(1)-)-methyltransferase"/>
    <property type="match status" value="1"/>
</dbReference>
<dbReference type="Gene3D" id="3.40.1280.10">
    <property type="match status" value="1"/>
</dbReference>
<dbReference type="Gene3D" id="1.10.1270.20">
    <property type="entry name" value="tRNA(m1g37)methyltransferase, domain 2"/>
    <property type="match status" value="1"/>
</dbReference>
<dbReference type="HAMAP" id="MF_00605">
    <property type="entry name" value="TrmD"/>
    <property type="match status" value="1"/>
</dbReference>
<dbReference type="InterPro" id="IPR029028">
    <property type="entry name" value="Alpha/beta_knot_MTases"/>
</dbReference>
<dbReference type="InterPro" id="IPR023148">
    <property type="entry name" value="tRNA_m1G_MeTrfase_C_sf"/>
</dbReference>
<dbReference type="InterPro" id="IPR002649">
    <property type="entry name" value="tRNA_m1G_MeTrfase_TrmD"/>
</dbReference>
<dbReference type="InterPro" id="IPR029026">
    <property type="entry name" value="tRNA_m1G_MTases_N"/>
</dbReference>
<dbReference type="InterPro" id="IPR016009">
    <property type="entry name" value="tRNA_MeTrfase_TRMD/TRM10"/>
</dbReference>
<dbReference type="NCBIfam" id="NF000648">
    <property type="entry name" value="PRK00026.1"/>
    <property type="match status" value="1"/>
</dbReference>
<dbReference type="NCBIfam" id="TIGR00088">
    <property type="entry name" value="trmD"/>
    <property type="match status" value="1"/>
</dbReference>
<dbReference type="PANTHER" id="PTHR46417">
    <property type="entry name" value="TRNA (GUANINE-N(1)-)-METHYLTRANSFERASE"/>
    <property type="match status" value="1"/>
</dbReference>
<dbReference type="PANTHER" id="PTHR46417:SF1">
    <property type="entry name" value="TRNA (GUANINE-N(1)-)-METHYLTRANSFERASE"/>
    <property type="match status" value="1"/>
</dbReference>
<dbReference type="Pfam" id="PF01746">
    <property type="entry name" value="tRNA_m1G_MT"/>
    <property type="match status" value="1"/>
</dbReference>
<dbReference type="PIRSF" id="PIRSF000386">
    <property type="entry name" value="tRNA_mtase"/>
    <property type="match status" value="1"/>
</dbReference>
<dbReference type="SUPFAM" id="SSF75217">
    <property type="entry name" value="alpha/beta knot"/>
    <property type="match status" value="1"/>
</dbReference>
<name>TRMD_BACFN</name>
<gene>
    <name evidence="1" type="primary">trmD</name>
    <name type="ordered locus">BF2484</name>
</gene>
<reference key="1">
    <citation type="journal article" date="2005" name="Science">
        <title>Extensive DNA inversions in the B. fragilis genome control variable gene expression.</title>
        <authorList>
            <person name="Cerdeno-Tarraga A.-M."/>
            <person name="Patrick S."/>
            <person name="Crossman L.C."/>
            <person name="Blakely G."/>
            <person name="Abratt V."/>
            <person name="Lennard N."/>
            <person name="Poxton I."/>
            <person name="Duerden B."/>
            <person name="Harris B."/>
            <person name="Quail M.A."/>
            <person name="Barron A."/>
            <person name="Clark L."/>
            <person name="Corton C."/>
            <person name="Doggett J."/>
            <person name="Holden M.T.G."/>
            <person name="Larke N."/>
            <person name="Line A."/>
            <person name="Lord A."/>
            <person name="Norbertczak H."/>
            <person name="Ormond D."/>
            <person name="Price C."/>
            <person name="Rabbinowitsch E."/>
            <person name="Woodward J."/>
            <person name="Barrell B.G."/>
            <person name="Parkhill J."/>
        </authorList>
    </citation>
    <scope>NUCLEOTIDE SEQUENCE [LARGE SCALE GENOMIC DNA]</scope>
    <source>
        <strain>ATCC 25285 / DSM 2151 / CCUG 4856 / JCM 11019 / LMG 10263 / NCTC 9343 / Onslow / VPI 2553 / EN-2</strain>
    </source>
</reference>
<keyword id="KW-0963">Cytoplasm</keyword>
<keyword id="KW-0489">Methyltransferase</keyword>
<keyword id="KW-0949">S-adenosyl-L-methionine</keyword>
<keyword id="KW-0808">Transferase</keyword>
<keyword id="KW-0819">tRNA processing</keyword>
<evidence type="ECO:0000255" key="1">
    <source>
        <dbReference type="HAMAP-Rule" id="MF_00605"/>
    </source>
</evidence>
<proteinExistence type="inferred from homology"/>
<sequence>MRIDIITVLPEMIEGFFNCSIMKRAQDKGLAEIHIHNLRDYTEDKYRRVDDYPFGGFAGMVMKIEPIERCINTLKAERDYDEVIFTTPDGEQFDQKMANSLSLSGNLIILCGHFKGIDYRIREHLITKEISIGDYVLTGGELAAAVMADAIVRIIPGVISDEQSALSDSFQDNLLAAPVYTRPAEYKGWKVPEILLSGHEAKIKEWELQQSLERTRRLRPDLLED</sequence>
<organism>
    <name type="scientific">Bacteroides fragilis (strain ATCC 25285 / DSM 2151 / CCUG 4856 / JCM 11019 / LMG 10263 / NCTC 9343 / Onslow / VPI 2553 / EN-2)</name>
    <dbReference type="NCBI Taxonomy" id="272559"/>
    <lineage>
        <taxon>Bacteria</taxon>
        <taxon>Pseudomonadati</taxon>
        <taxon>Bacteroidota</taxon>
        <taxon>Bacteroidia</taxon>
        <taxon>Bacteroidales</taxon>
        <taxon>Bacteroidaceae</taxon>
        <taxon>Bacteroides</taxon>
    </lineage>
</organism>
<feature type="chain" id="PRO_0000060329" description="tRNA (guanine-N(1)-)-methyltransferase">
    <location>
        <begin position="1"/>
        <end position="225"/>
    </location>
</feature>
<feature type="binding site" evidence="1">
    <location>
        <position position="112"/>
    </location>
    <ligand>
        <name>S-adenosyl-L-methionine</name>
        <dbReference type="ChEBI" id="CHEBI:59789"/>
    </ligand>
</feature>
<feature type="binding site" evidence="1">
    <location>
        <begin position="132"/>
        <end position="137"/>
    </location>
    <ligand>
        <name>S-adenosyl-L-methionine</name>
        <dbReference type="ChEBI" id="CHEBI:59789"/>
    </ligand>
</feature>